<name>ACCD_ACTPJ</name>
<protein>
    <recommendedName>
        <fullName evidence="1">Acetyl-coenzyme A carboxylase carboxyl transferase subunit beta</fullName>
        <shortName evidence="1">ACCase subunit beta</shortName>
        <shortName evidence="1">Acetyl-CoA carboxylase carboxyltransferase subunit beta</shortName>
        <ecNumber evidence="1">2.1.3.15</ecNumber>
    </recommendedName>
</protein>
<comment type="function">
    <text evidence="1">Component of the acetyl coenzyme A carboxylase (ACC) complex. Biotin carboxylase (BC) catalyzes the carboxylation of biotin on its carrier protein (BCCP) and then the CO(2) group is transferred by the transcarboxylase to acetyl-CoA to form malonyl-CoA.</text>
</comment>
<comment type="catalytic activity">
    <reaction evidence="1">
        <text>N(6)-carboxybiotinyl-L-lysyl-[protein] + acetyl-CoA = N(6)-biotinyl-L-lysyl-[protein] + malonyl-CoA</text>
        <dbReference type="Rhea" id="RHEA:54728"/>
        <dbReference type="Rhea" id="RHEA-COMP:10505"/>
        <dbReference type="Rhea" id="RHEA-COMP:10506"/>
        <dbReference type="ChEBI" id="CHEBI:57288"/>
        <dbReference type="ChEBI" id="CHEBI:57384"/>
        <dbReference type="ChEBI" id="CHEBI:83144"/>
        <dbReference type="ChEBI" id="CHEBI:83145"/>
        <dbReference type="EC" id="2.1.3.15"/>
    </reaction>
</comment>
<comment type="cofactor">
    <cofactor evidence="1">
        <name>Zn(2+)</name>
        <dbReference type="ChEBI" id="CHEBI:29105"/>
    </cofactor>
    <text evidence="1">Binds 1 zinc ion per subunit.</text>
</comment>
<comment type="pathway">
    <text evidence="1">Lipid metabolism; malonyl-CoA biosynthesis; malonyl-CoA from acetyl-CoA: step 1/1.</text>
</comment>
<comment type="subunit">
    <text evidence="1">Acetyl-CoA carboxylase is a heterohexamer composed of biotin carboxyl carrier protein (AccB), biotin carboxylase (AccC) and two subunits each of ACCase subunit alpha (AccA) and ACCase subunit beta (AccD).</text>
</comment>
<comment type="subcellular location">
    <subcellularLocation>
        <location evidence="1">Cytoplasm</location>
    </subcellularLocation>
</comment>
<comment type="similarity">
    <text evidence="1">Belongs to the AccD/PCCB family.</text>
</comment>
<proteinExistence type="inferred from homology"/>
<gene>
    <name evidence="1" type="primary">accD</name>
    <name type="ordered locus">APJL_0626</name>
</gene>
<keyword id="KW-0067">ATP-binding</keyword>
<keyword id="KW-0963">Cytoplasm</keyword>
<keyword id="KW-0275">Fatty acid biosynthesis</keyword>
<keyword id="KW-0276">Fatty acid metabolism</keyword>
<keyword id="KW-0444">Lipid biosynthesis</keyword>
<keyword id="KW-0443">Lipid metabolism</keyword>
<keyword id="KW-0479">Metal-binding</keyword>
<keyword id="KW-0547">Nucleotide-binding</keyword>
<keyword id="KW-0808">Transferase</keyword>
<keyword id="KW-0862">Zinc</keyword>
<keyword id="KW-0863">Zinc-finger</keyword>
<dbReference type="EC" id="2.1.3.15" evidence="1"/>
<dbReference type="EMBL" id="CP000687">
    <property type="protein sequence ID" value="ABY69196.1"/>
    <property type="molecule type" value="Genomic_DNA"/>
</dbReference>
<dbReference type="RefSeq" id="WP_005596910.1">
    <property type="nucleotide sequence ID" value="NC_010278.1"/>
</dbReference>
<dbReference type="SMR" id="B0BNR1"/>
<dbReference type="GeneID" id="48598818"/>
<dbReference type="KEGG" id="apj:APJL_0626"/>
<dbReference type="HOGENOM" id="CLU_015486_1_0_6"/>
<dbReference type="UniPathway" id="UPA00655">
    <property type="reaction ID" value="UER00711"/>
</dbReference>
<dbReference type="Proteomes" id="UP000008547">
    <property type="component" value="Chromosome"/>
</dbReference>
<dbReference type="GO" id="GO:0009329">
    <property type="term" value="C:acetate CoA-transferase complex"/>
    <property type="evidence" value="ECO:0007669"/>
    <property type="project" value="TreeGrafter"/>
</dbReference>
<dbReference type="GO" id="GO:0003989">
    <property type="term" value="F:acetyl-CoA carboxylase activity"/>
    <property type="evidence" value="ECO:0007669"/>
    <property type="project" value="InterPro"/>
</dbReference>
<dbReference type="GO" id="GO:0005524">
    <property type="term" value="F:ATP binding"/>
    <property type="evidence" value="ECO:0007669"/>
    <property type="project" value="UniProtKB-KW"/>
</dbReference>
<dbReference type="GO" id="GO:0016743">
    <property type="term" value="F:carboxyl- or carbamoyltransferase activity"/>
    <property type="evidence" value="ECO:0007669"/>
    <property type="project" value="UniProtKB-UniRule"/>
</dbReference>
<dbReference type="GO" id="GO:0008270">
    <property type="term" value="F:zinc ion binding"/>
    <property type="evidence" value="ECO:0007669"/>
    <property type="project" value="UniProtKB-UniRule"/>
</dbReference>
<dbReference type="GO" id="GO:0006633">
    <property type="term" value="P:fatty acid biosynthetic process"/>
    <property type="evidence" value="ECO:0007669"/>
    <property type="project" value="UniProtKB-KW"/>
</dbReference>
<dbReference type="GO" id="GO:2001295">
    <property type="term" value="P:malonyl-CoA biosynthetic process"/>
    <property type="evidence" value="ECO:0007669"/>
    <property type="project" value="UniProtKB-UniRule"/>
</dbReference>
<dbReference type="Gene3D" id="3.90.226.10">
    <property type="entry name" value="2-enoyl-CoA Hydratase, Chain A, domain 1"/>
    <property type="match status" value="1"/>
</dbReference>
<dbReference type="HAMAP" id="MF_01395">
    <property type="entry name" value="AcetylCoA_CT_beta"/>
    <property type="match status" value="1"/>
</dbReference>
<dbReference type="InterPro" id="IPR034733">
    <property type="entry name" value="AcCoA_carboxyl_beta"/>
</dbReference>
<dbReference type="InterPro" id="IPR000438">
    <property type="entry name" value="Acetyl_CoA_COase_Trfase_b_su"/>
</dbReference>
<dbReference type="InterPro" id="IPR029045">
    <property type="entry name" value="ClpP/crotonase-like_dom_sf"/>
</dbReference>
<dbReference type="InterPro" id="IPR011762">
    <property type="entry name" value="COA_CT_N"/>
</dbReference>
<dbReference type="InterPro" id="IPR041010">
    <property type="entry name" value="Znf-ACC"/>
</dbReference>
<dbReference type="NCBIfam" id="TIGR00515">
    <property type="entry name" value="accD"/>
    <property type="match status" value="1"/>
</dbReference>
<dbReference type="PANTHER" id="PTHR42995">
    <property type="entry name" value="ACETYL-COENZYME A CARBOXYLASE CARBOXYL TRANSFERASE SUBUNIT BETA, CHLOROPLASTIC"/>
    <property type="match status" value="1"/>
</dbReference>
<dbReference type="PANTHER" id="PTHR42995:SF5">
    <property type="entry name" value="ACETYL-COENZYME A CARBOXYLASE CARBOXYL TRANSFERASE SUBUNIT BETA, CHLOROPLASTIC"/>
    <property type="match status" value="1"/>
</dbReference>
<dbReference type="Pfam" id="PF01039">
    <property type="entry name" value="Carboxyl_trans"/>
    <property type="match status" value="1"/>
</dbReference>
<dbReference type="Pfam" id="PF17848">
    <property type="entry name" value="Zn_ribbon_ACC"/>
    <property type="match status" value="1"/>
</dbReference>
<dbReference type="PRINTS" id="PR01070">
    <property type="entry name" value="ACCCTRFRASEB"/>
</dbReference>
<dbReference type="SUPFAM" id="SSF52096">
    <property type="entry name" value="ClpP/crotonase"/>
    <property type="match status" value="1"/>
</dbReference>
<dbReference type="PROSITE" id="PS50980">
    <property type="entry name" value="COA_CT_NTER"/>
    <property type="match status" value="1"/>
</dbReference>
<reference key="1">
    <citation type="journal article" date="2008" name="PLoS ONE">
        <title>Genome biology of Actinobacillus pleuropneumoniae JL03, an isolate of serotype 3 prevalent in China.</title>
        <authorList>
            <person name="Xu Z."/>
            <person name="Zhou Y."/>
            <person name="Li L."/>
            <person name="Zhou R."/>
            <person name="Xiao S."/>
            <person name="Wan Y."/>
            <person name="Zhang S."/>
            <person name="Wang K."/>
            <person name="Li W."/>
            <person name="Li L."/>
            <person name="Jin H."/>
            <person name="Kang M."/>
            <person name="Dalai B."/>
            <person name="Li T."/>
            <person name="Liu L."/>
            <person name="Cheng Y."/>
            <person name="Zhang L."/>
            <person name="Xu T."/>
            <person name="Zheng H."/>
            <person name="Pu S."/>
            <person name="Wang B."/>
            <person name="Gu W."/>
            <person name="Zhang X.L."/>
            <person name="Zhu G.-F."/>
            <person name="Wang S."/>
            <person name="Zhao G.-P."/>
            <person name="Chen H."/>
        </authorList>
    </citation>
    <scope>NUCLEOTIDE SEQUENCE [LARGE SCALE GENOMIC DNA]</scope>
    <source>
        <strain>JL03</strain>
    </source>
</reference>
<organism>
    <name type="scientific">Actinobacillus pleuropneumoniae serotype 3 (strain JL03)</name>
    <dbReference type="NCBI Taxonomy" id="434271"/>
    <lineage>
        <taxon>Bacteria</taxon>
        <taxon>Pseudomonadati</taxon>
        <taxon>Pseudomonadota</taxon>
        <taxon>Gammaproteobacteria</taxon>
        <taxon>Pasteurellales</taxon>
        <taxon>Pasteurellaceae</taxon>
        <taxon>Actinobacillus</taxon>
    </lineage>
</organism>
<feature type="chain" id="PRO_0000358944" description="Acetyl-coenzyme A carboxylase carboxyl transferase subunit beta">
    <location>
        <begin position="1"/>
        <end position="297"/>
    </location>
</feature>
<feature type="domain" description="CoA carboxyltransferase N-terminal" evidence="2">
    <location>
        <begin position="26"/>
        <end position="295"/>
    </location>
</feature>
<feature type="zinc finger region" description="C4-type" evidence="1">
    <location>
        <begin position="30"/>
        <end position="52"/>
    </location>
</feature>
<feature type="region of interest" description="Disordered" evidence="3">
    <location>
        <begin position="1"/>
        <end position="23"/>
    </location>
</feature>
<feature type="binding site" evidence="1">
    <location>
        <position position="30"/>
    </location>
    <ligand>
        <name>Zn(2+)</name>
        <dbReference type="ChEBI" id="CHEBI:29105"/>
    </ligand>
</feature>
<feature type="binding site" evidence="1">
    <location>
        <position position="33"/>
    </location>
    <ligand>
        <name>Zn(2+)</name>
        <dbReference type="ChEBI" id="CHEBI:29105"/>
    </ligand>
</feature>
<feature type="binding site" evidence="1">
    <location>
        <position position="49"/>
    </location>
    <ligand>
        <name>Zn(2+)</name>
        <dbReference type="ChEBI" id="CHEBI:29105"/>
    </ligand>
</feature>
<feature type="binding site" evidence="1">
    <location>
        <position position="52"/>
    </location>
    <ligand>
        <name>Zn(2+)</name>
        <dbReference type="ChEBI" id="CHEBI:29105"/>
    </ligand>
</feature>
<accession>B0BNR1</accession>
<sequence length="297" mass="32892">MSWIERILGRTSSSSSSSKSKVPEGVWTKCTSCEQVLYSEELKRNMHVCPKCNHHMRFDARTRLLSLLDQDSAQEIAAELEPQDVLKFKDLKKYKDRLTAAQKQTGEKDSFITMYGTLHNMPVVVASFNFEFMGGSMGSVVGAKFVRAAERALADNIPFICFSASGGARMQEALFSLMQMAKTSAILAKMREKGIPFISVLTDPTLGGVSASLAMLGDINIAEPKALIGFAGPRVIEQTVREKLPEGFQRAEFLLEHGAIDMIVQRKDMRDTLARLCAKMTNKPTPFKTAELIVEEA</sequence>
<evidence type="ECO:0000255" key="1">
    <source>
        <dbReference type="HAMAP-Rule" id="MF_01395"/>
    </source>
</evidence>
<evidence type="ECO:0000255" key="2">
    <source>
        <dbReference type="PROSITE-ProRule" id="PRU01136"/>
    </source>
</evidence>
<evidence type="ECO:0000256" key="3">
    <source>
        <dbReference type="SAM" id="MobiDB-lite"/>
    </source>
</evidence>